<dbReference type="EMBL" id="CR382126">
    <property type="protein sequence ID" value="CAG98940.1"/>
    <property type="molecule type" value="Genomic_DNA"/>
</dbReference>
<dbReference type="RefSeq" id="XP_456232.1">
    <property type="nucleotide sequence ID" value="XM_456232.1"/>
</dbReference>
<dbReference type="SMR" id="Q6CIK7"/>
<dbReference type="FunCoup" id="Q6CIK7">
    <property type="interactions" value="691"/>
</dbReference>
<dbReference type="STRING" id="284590.Q6CIK7"/>
<dbReference type="PaxDb" id="284590-Q6CIK7"/>
<dbReference type="KEGG" id="kla:KLLA0_F25872g"/>
<dbReference type="eggNOG" id="KOG3480">
    <property type="taxonomic scope" value="Eukaryota"/>
</dbReference>
<dbReference type="HOGENOM" id="CLU_162151_1_0_1"/>
<dbReference type="InParanoid" id="Q6CIK7"/>
<dbReference type="OMA" id="VGENMQK"/>
<dbReference type="Proteomes" id="UP000000598">
    <property type="component" value="Chromosome F"/>
</dbReference>
<dbReference type="GO" id="GO:0005743">
    <property type="term" value="C:mitochondrial inner membrane"/>
    <property type="evidence" value="ECO:0007669"/>
    <property type="project" value="UniProtKB-SubCell"/>
</dbReference>
<dbReference type="GO" id="GO:0046872">
    <property type="term" value="F:metal ion binding"/>
    <property type="evidence" value="ECO:0007669"/>
    <property type="project" value="UniProtKB-KW"/>
</dbReference>
<dbReference type="GO" id="GO:0045039">
    <property type="term" value="P:protein insertion into mitochondrial inner membrane"/>
    <property type="evidence" value="ECO:0007669"/>
    <property type="project" value="TreeGrafter"/>
</dbReference>
<dbReference type="FunFam" id="1.10.287.810:FF:000002">
    <property type="entry name" value="Mitochondrial import inner membrane translocase subunit tim10"/>
    <property type="match status" value="1"/>
</dbReference>
<dbReference type="Gene3D" id="1.10.287.810">
    <property type="entry name" value="Mitochondrial import inner membrane translocase subunit tim13 like domains"/>
    <property type="match status" value="1"/>
</dbReference>
<dbReference type="InterPro" id="IPR004217">
    <property type="entry name" value="Tim10-like"/>
</dbReference>
<dbReference type="InterPro" id="IPR035427">
    <property type="entry name" value="Tim10-like_dom_sf"/>
</dbReference>
<dbReference type="PANTHER" id="PTHR11038">
    <property type="entry name" value="MITOCHONDRIAL IMPORT INNER MEMBRANE TRANSLOCASE SUBUNIT TIM10"/>
    <property type="match status" value="1"/>
</dbReference>
<dbReference type="PANTHER" id="PTHR11038:SF16">
    <property type="entry name" value="MITOCHONDRIAL IMPORT INNER MEMBRANE TRANSLOCASE SUBUNIT TIM10"/>
    <property type="match status" value="1"/>
</dbReference>
<dbReference type="Pfam" id="PF02953">
    <property type="entry name" value="zf-Tim10_DDP"/>
    <property type="match status" value="1"/>
</dbReference>
<dbReference type="SUPFAM" id="SSF144122">
    <property type="entry name" value="Tim10-like"/>
    <property type="match status" value="1"/>
</dbReference>
<reference key="1">
    <citation type="journal article" date="2004" name="Nature">
        <title>Genome evolution in yeasts.</title>
        <authorList>
            <person name="Dujon B."/>
            <person name="Sherman D."/>
            <person name="Fischer G."/>
            <person name="Durrens P."/>
            <person name="Casaregola S."/>
            <person name="Lafontaine I."/>
            <person name="de Montigny J."/>
            <person name="Marck C."/>
            <person name="Neuveglise C."/>
            <person name="Talla E."/>
            <person name="Goffard N."/>
            <person name="Frangeul L."/>
            <person name="Aigle M."/>
            <person name="Anthouard V."/>
            <person name="Babour A."/>
            <person name="Barbe V."/>
            <person name="Barnay S."/>
            <person name="Blanchin S."/>
            <person name="Beckerich J.-M."/>
            <person name="Beyne E."/>
            <person name="Bleykasten C."/>
            <person name="Boisrame A."/>
            <person name="Boyer J."/>
            <person name="Cattolico L."/>
            <person name="Confanioleri F."/>
            <person name="de Daruvar A."/>
            <person name="Despons L."/>
            <person name="Fabre E."/>
            <person name="Fairhead C."/>
            <person name="Ferry-Dumazet H."/>
            <person name="Groppi A."/>
            <person name="Hantraye F."/>
            <person name="Hennequin C."/>
            <person name="Jauniaux N."/>
            <person name="Joyet P."/>
            <person name="Kachouri R."/>
            <person name="Kerrest A."/>
            <person name="Koszul R."/>
            <person name="Lemaire M."/>
            <person name="Lesur I."/>
            <person name="Ma L."/>
            <person name="Muller H."/>
            <person name="Nicaud J.-M."/>
            <person name="Nikolski M."/>
            <person name="Oztas S."/>
            <person name="Ozier-Kalogeropoulos O."/>
            <person name="Pellenz S."/>
            <person name="Potier S."/>
            <person name="Richard G.-F."/>
            <person name="Straub M.-L."/>
            <person name="Suleau A."/>
            <person name="Swennen D."/>
            <person name="Tekaia F."/>
            <person name="Wesolowski-Louvel M."/>
            <person name="Westhof E."/>
            <person name="Wirth B."/>
            <person name="Zeniou-Meyer M."/>
            <person name="Zivanovic Y."/>
            <person name="Bolotin-Fukuhara M."/>
            <person name="Thierry A."/>
            <person name="Bouchier C."/>
            <person name="Caudron B."/>
            <person name="Scarpelli C."/>
            <person name="Gaillardin C."/>
            <person name="Weissenbach J."/>
            <person name="Wincker P."/>
            <person name="Souciet J.-L."/>
        </authorList>
    </citation>
    <scope>NUCLEOTIDE SEQUENCE [LARGE SCALE GENOMIC DNA]</scope>
    <source>
        <strain>ATCC 8585 / CBS 2359 / DSM 70799 / NBRC 1267 / NRRL Y-1140 / WM37</strain>
    </source>
</reference>
<keyword id="KW-0143">Chaperone</keyword>
<keyword id="KW-1015">Disulfide bond</keyword>
<keyword id="KW-0472">Membrane</keyword>
<keyword id="KW-0479">Metal-binding</keyword>
<keyword id="KW-0496">Mitochondrion</keyword>
<keyword id="KW-0999">Mitochondrion inner membrane</keyword>
<keyword id="KW-0653">Protein transport</keyword>
<keyword id="KW-1185">Reference proteome</keyword>
<keyword id="KW-0811">Translocation</keyword>
<keyword id="KW-0813">Transport</keyword>
<keyword id="KW-0862">Zinc</keyword>
<sequence length="89" mass="9935">MFGLGGQPQLSSQQKLSAAEAELDLVTDMFNKLVDNCHKKCIEQIYNDGQLNKNESTCIDRCVAKYFETNVKVGENMQQLGQAFSPGKF</sequence>
<feature type="chain" id="PRO_0000193619" description="Mitochondrial import inner membrane translocase subunit TIM10">
    <location>
        <begin position="1"/>
        <end position="89"/>
    </location>
</feature>
<feature type="short sequence motif" description="Twin CX3C motif">
    <location>
        <begin position="37"/>
        <end position="62"/>
    </location>
</feature>
<feature type="disulfide bond" evidence="1">
    <location>
        <begin position="37"/>
        <end position="62"/>
    </location>
</feature>
<feature type="disulfide bond" evidence="1">
    <location>
        <begin position="41"/>
        <end position="58"/>
    </location>
</feature>
<accession>Q6CIK7</accession>
<name>TIM10_KLULA</name>
<comment type="function">
    <text evidence="1">Mitochondrial intermembrane chaperone that participates in the import and insertion of multi-pass transmembrane proteins into the mitochondrial inner membrane. Also required for the transfer of beta-barrel precursors from the TOM complex to the sorting and assembly machinery (SAM complex) of the outer membrane. Acts as a chaperone-like protein that protects the hydrophobic precursors from aggregation and guide them through the mitochondrial intermembrane space (By similarity).</text>
</comment>
<comment type="subunit">
    <text evidence="1">Heterohexamer; composed of 3 copies of TIM9 and 3 copies of TIM10, named soluble 70 kDa complex. Associates directly with the TIM22 complex, whose core is composed of TIM22 and TIM54. Interacts with the transmembrane regions of multi-pass transmembrane proteins in transit (By similarity).</text>
</comment>
<comment type="subcellular location">
    <subcellularLocation>
        <location evidence="1">Mitochondrion inner membrane</location>
        <topology evidence="1">Peripheral membrane protein</topology>
        <orientation evidence="1">Intermembrane side</orientation>
    </subcellularLocation>
</comment>
<comment type="domain">
    <text evidence="1">The twin CX3C motif contains 4 conserved Cys residues that form 2 disulfide bonds in the mitochondrial intermembrane space. However, during the transit of TIM10 from cytoplasm into mitochondrion, the Cys residues probably coordinate zinc, thereby preventing folding and allowing its transfer across mitochondrial outer membrane (By similarity).</text>
</comment>
<comment type="similarity">
    <text evidence="2">Belongs to the small Tim family.</text>
</comment>
<gene>
    <name type="primary">TIM10</name>
    <name type="ordered locus">KLLA0F25872g</name>
</gene>
<organism>
    <name type="scientific">Kluyveromyces lactis (strain ATCC 8585 / CBS 2359 / DSM 70799 / NBRC 1267 / NRRL Y-1140 / WM37)</name>
    <name type="common">Yeast</name>
    <name type="synonym">Candida sphaerica</name>
    <dbReference type="NCBI Taxonomy" id="284590"/>
    <lineage>
        <taxon>Eukaryota</taxon>
        <taxon>Fungi</taxon>
        <taxon>Dikarya</taxon>
        <taxon>Ascomycota</taxon>
        <taxon>Saccharomycotina</taxon>
        <taxon>Saccharomycetes</taxon>
        <taxon>Saccharomycetales</taxon>
        <taxon>Saccharomycetaceae</taxon>
        <taxon>Kluyveromyces</taxon>
    </lineage>
</organism>
<evidence type="ECO:0000250" key="1"/>
<evidence type="ECO:0000305" key="2"/>
<protein>
    <recommendedName>
        <fullName>Mitochondrial import inner membrane translocase subunit TIM10</fullName>
    </recommendedName>
</protein>
<proteinExistence type="inferred from homology"/>